<comment type="function">
    <text evidence="1">Component of the viral DNA-dependent RNA polymerase that catalyzes two reactions involved in viral RNA cap formation: an RNA 5'-triphosphatase that hydrolyzes the gamma phosphate of triphosphate-terminated RNA and a guanylyltransferase that reacts with GTP to form a covalent protein-guanylate adduct. Therefore plays an essential role in late and very late gene expression.</text>
</comment>
<comment type="catalytic activity">
    <reaction evidence="1">
        <text>a 5'-end diphospho-ribonucleoside in mRNA + GTP + H(+) = a 5'-end (5'-triphosphoguanosine)-ribonucleoside in mRNA + diphosphate</text>
        <dbReference type="Rhea" id="RHEA:67012"/>
        <dbReference type="Rhea" id="RHEA-COMP:17165"/>
        <dbReference type="Rhea" id="RHEA-COMP:17166"/>
        <dbReference type="ChEBI" id="CHEBI:15378"/>
        <dbReference type="ChEBI" id="CHEBI:33019"/>
        <dbReference type="ChEBI" id="CHEBI:37565"/>
        <dbReference type="ChEBI" id="CHEBI:167616"/>
        <dbReference type="ChEBI" id="CHEBI:167617"/>
        <dbReference type="EC" id="2.7.7.50"/>
    </reaction>
</comment>
<comment type="catalytic activity">
    <reaction evidence="1">
        <text>a 5'-end triphospho-ribonucleoside in mRNA + H2O = a 5'-end diphospho-ribonucleoside in mRNA + phosphate + H(+)</text>
        <dbReference type="Rhea" id="RHEA:67004"/>
        <dbReference type="Rhea" id="RHEA-COMP:17164"/>
        <dbReference type="Rhea" id="RHEA-COMP:17165"/>
        <dbReference type="ChEBI" id="CHEBI:15377"/>
        <dbReference type="ChEBI" id="CHEBI:15378"/>
        <dbReference type="ChEBI" id="CHEBI:43474"/>
        <dbReference type="ChEBI" id="CHEBI:167616"/>
        <dbReference type="ChEBI" id="CHEBI:167618"/>
        <dbReference type="EC" id="3.6.1.74"/>
    </reaction>
</comment>
<comment type="subcellular location">
    <subcellularLocation>
        <location evidence="1">Host cytoplasm</location>
    </subcellularLocation>
    <subcellularLocation>
        <location evidence="1">Host nucleus</location>
    </subcellularLocation>
    <text evidence="1">Preferentially in the host nucleus and associated with the virogenic stroma.</text>
</comment>
<comment type="similarity">
    <text evidence="2">Belongs to the baculoviridae LEF-4 family.</text>
</comment>
<feature type="chain" id="PRO_0000132825" description="mRNA capping enzyme LEF-4">
    <location>
        <begin position="1"/>
        <end position="457"/>
    </location>
</feature>
<feature type="region of interest" description="mRNA triphosphatase" evidence="1">
    <location>
        <begin position="1"/>
        <end position="199"/>
    </location>
</feature>
<feature type="region of interest" description="mRNA guanylyltransferase" evidence="1">
    <location>
        <begin position="200"/>
        <end position="454"/>
    </location>
</feature>
<feature type="active site" description="N6-GMP-lysine intermediate" evidence="1">
    <location>
        <position position="250"/>
    </location>
</feature>
<organismHost>
    <name type="scientific">Orgyia pseudotsugata</name>
    <name type="common">Douglas-fir tussock moth</name>
    <dbReference type="NCBI Taxonomy" id="33414"/>
</organismHost>
<accession>O10340</accession>
<keyword id="KW-0342">GTP-binding</keyword>
<keyword id="KW-1035">Host cytoplasm</keyword>
<keyword id="KW-1048">Host nucleus</keyword>
<keyword id="KW-0378">Hydrolase</keyword>
<keyword id="KW-0506">mRNA capping</keyword>
<keyword id="KW-0507">mRNA processing</keyword>
<keyword id="KW-0547">Nucleotide-binding</keyword>
<keyword id="KW-0548">Nucleotidyltransferase</keyword>
<keyword id="KW-1185">Reference proteome</keyword>
<keyword id="KW-0804">Transcription</keyword>
<keyword id="KW-0805">Transcription regulation</keyword>
<keyword id="KW-0808">Transferase</keyword>
<reference key="1">
    <citation type="journal article" date="1997" name="Virology">
        <title>The sequence of the Orgyia pseudotsugata multinucleocapsid nuclear polyhedrosis virus genome.</title>
        <authorList>
            <person name="Ahrens C.H."/>
            <person name="Russell R.R."/>
            <person name="Funk C.J."/>
            <person name="Evans J."/>
            <person name="Harwood S."/>
            <person name="Rohrmann G.F."/>
        </authorList>
    </citation>
    <scope>NUCLEOTIDE SEQUENCE [LARGE SCALE GENOMIC DNA]</scope>
</reference>
<organism>
    <name type="scientific">Orgyia pseudotsugata multicapsid polyhedrosis virus</name>
    <name type="common">OpMNPV</name>
    <dbReference type="NCBI Taxonomy" id="262177"/>
    <lineage>
        <taxon>Viruses</taxon>
        <taxon>Viruses incertae sedis</taxon>
        <taxon>Naldaviricetes</taxon>
        <taxon>Lefavirales</taxon>
        <taxon>Baculoviridae</taxon>
        <taxon>Alphabaculovirus</taxon>
        <taxon>Alphabaculovirus orpseudotsugatae</taxon>
    </lineage>
</organism>
<gene>
    <name type="primary">LEF-4</name>
    <name type="ORF">ORF91</name>
</gene>
<proteinExistence type="inferred from homology"/>
<dbReference type="EC" id="2.7.7.50" evidence="1"/>
<dbReference type="EC" id="3.6.1.74" evidence="1"/>
<dbReference type="EMBL" id="U75930">
    <property type="protein sequence ID" value="AAC59090.1"/>
    <property type="molecule type" value="Genomic_DNA"/>
</dbReference>
<dbReference type="RefSeq" id="NP_046247.1">
    <property type="nucleotide sequence ID" value="NC_001875.2"/>
</dbReference>
<dbReference type="KEGG" id="vg:911963"/>
<dbReference type="OrthoDB" id="6452at10239"/>
<dbReference type="Proteomes" id="UP000009248">
    <property type="component" value="Genome"/>
</dbReference>
<dbReference type="GO" id="GO:0030430">
    <property type="term" value="C:host cell cytoplasm"/>
    <property type="evidence" value="ECO:0007669"/>
    <property type="project" value="UniProtKB-SubCell"/>
</dbReference>
<dbReference type="GO" id="GO:0042025">
    <property type="term" value="C:host cell nucleus"/>
    <property type="evidence" value="ECO:0007669"/>
    <property type="project" value="UniProtKB-SubCell"/>
</dbReference>
<dbReference type="GO" id="GO:0006355">
    <property type="term" value="P:regulation of DNA-templated transcription"/>
    <property type="evidence" value="ECO:0007669"/>
    <property type="project" value="InterPro"/>
</dbReference>
<dbReference type="InterPro" id="IPR007790">
    <property type="entry name" value="LEF-4"/>
</dbReference>
<dbReference type="Pfam" id="PF05098">
    <property type="entry name" value="LEF-4"/>
    <property type="match status" value="1"/>
</dbReference>
<evidence type="ECO:0000250" key="1">
    <source>
        <dbReference type="UniProtKB" id="P41477"/>
    </source>
</evidence>
<evidence type="ECO:0000305" key="2"/>
<sequence length="457" mass="51151">MGADVLIEQEISYTINFSQDLLYLILDSYIKKRCAAPAERYTDLYDANNVRTRQTADSAVSVHKTNLRDERFVHWLRSSNALVPLVRRENRETAVPHDRVSRHIASLIETTVYKLDGVDVKFEHVYMQSGPADRYESTAAHKIAALKTALLGVDCARPSQNLQLGSDAVLARVRLELEFEGAAPAAASLDAFCELVVQMETLADHHNIAPCLPYTTLLDSATPRRFTREQRIAYGAQAPDSTGVKKWAFKLDGVRGRGAFRRGYCLVQTDDMQLHAACISSPFGLNNVVTFQCEVVADKIFVTDLLQVFRYKYNNRTQYECNLHDAYPINADVAVECLNRLHCAVGSVPWPGLGELRFQQFFDPPLAPTHYTTIPIDGYIVLDEQLQYAKYKWLPTVELEYDAPSGALHSIDGPLLGKTVVADLQLKHGAVYECAITDNAINVLKCRPDRIVPSKVC</sequence>
<protein>
    <recommendedName>
        <fullName>mRNA capping enzyme LEF-4</fullName>
        <ecNumber evidence="1">2.7.7.50</ecNumber>
        <ecNumber evidence="1">3.6.1.74</ecNumber>
    </recommendedName>
    <alternativeName>
        <fullName>Late expression factor 4</fullName>
        <shortName>LEF-4</shortName>
    </alternativeName>
</protein>
<name>LEF4_NPVOP</name>